<comment type="function">
    <text evidence="3">May bind to RNA via its Arg/Ser-rich domain.</text>
</comment>
<comment type="interaction">
    <interactant intactId="EBI-473747">
        <id>Q9NQ29</id>
    </interactant>
    <interactant intactId="EBI-2555370">
        <id>Q8IWX8</id>
        <label>CHERP</label>
    </interactant>
    <organismsDiffer>false</organismsDiffer>
    <experiments>2</experiments>
</comment>
<comment type="interaction">
    <interactant intactId="EBI-473747">
        <id>Q9NQ29</id>
    </interactant>
    <interactant intactId="EBI-473747">
        <id>Q9NQ29</id>
        <label>LUC7L</label>
    </interactant>
    <organismsDiffer>false</organismsDiffer>
    <experiments>2</experiments>
</comment>
<comment type="interaction">
    <interactant intactId="EBI-473747">
        <id>Q9NQ29</id>
    </interactant>
    <interactant intactId="EBI-2372399">
        <id>O60930</id>
        <label>RNASEH1</label>
    </interactant>
    <organismsDiffer>false</organismsDiffer>
    <experiments>2</experiments>
</comment>
<comment type="interaction">
    <interactant intactId="EBI-473747">
        <id>Q9NQ29</id>
    </interactant>
    <interactant intactId="EBI-5235340">
        <id>Q7Z699</id>
        <label>SPRED1</label>
    </interactant>
    <organismsDiffer>false</organismsDiffer>
    <experiments>3</experiments>
</comment>
<comment type="interaction">
    <interactant intactId="EBI-473747">
        <id>Q9NQ29</id>
    </interactant>
    <interactant intactId="EBI-539478">
        <id>Q96SB4</id>
        <label>SRPK1</label>
    </interactant>
    <organismsDiffer>false</organismsDiffer>
    <experiments>4</experiments>
</comment>
<comment type="interaction">
    <interactant intactId="EBI-473747">
        <id>Q9NQ29</id>
    </interactant>
    <interactant intactId="EBI-593303">
        <id>P78362</id>
        <label>SRPK2</label>
    </interactant>
    <organismsDiffer>false</organismsDiffer>
    <experiments>6</experiments>
</comment>
<comment type="interaction">
    <interactant intactId="EBI-6654742">
        <id>Q9NQ29-3</id>
    </interactant>
    <interactant intactId="EBI-745230">
        <id>Q13247</id>
        <label>SRSF6</label>
    </interactant>
    <organismsDiffer>false</organismsDiffer>
    <experiments>3</experiments>
</comment>
<comment type="interaction">
    <interactant intactId="EBI-6654742">
        <id>Q9NQ29-3</id>
    </interactant>
    <interactant intactId="EBI-398885">
        <id>Q16629</id>
        <label>SRSF7</label>
    </interactant>
    <organismsDiffer>false</organismsDiffer>
    <experiments>3</experiments>
</comment>
<comment type="alternative products">
    <event type="alternative splicing"/>
    <isoform>
        <id>Q9NQ29-1</id>
        <name>1</name>
        <sequence type="displayed"/>
    </isoform>
    <isoform>
        <id>Q9NQ29-2</id>
        <name>2</name>
        <sequence type="described" ref="VSP_010215"/>
    </isoform>
    <isoform>
        <id>Q9NQ29-3</id>
        <name>3</name>
        <sequence type="described" ref="VSP_010214"/>
    </isoform>
</comment>
<comment type="tissue specificity">
    <text evidence="3">Ubiquitous.</text>
</comment>
<comment type="miscellaneous">
    <molecule>Isoform 2</molecule>
    <text evidence="6">May be due to an intron retention.</text>
</comment>
<comment type="similarity">
    <text evidence="6">Belongs to the Luc7 family.</text>
</comment>
<protein>
    <recommendedName>
        <fullName>Putative RNA-binding protein Luc7-like 1</fullName>
    </recommendedName>
    <alternativeName>
        <fullName>Putative SR protein LUC7B1</fullName>
    </alternativeName>
    <alternativeName>
        <fullName>SR+89</fullName>
    </alternativeName>
</protein>
<accession>Q9NQ29</accession>
<accession>B8ZZ13</accession>
<accession>Q96S32</accession>
<accession>Q9NPH4</accession>
<keyword id="KW-0025">Alternative splicing</keyword>
<keyword id="KW-0175">Coiled coil</keyword>
<keyword id="KW-0597">Phosphoprotein</keyword>
<keyword id="KW-1267">Proteomics identification</keyword>
<keyword id="KW-1185">Reference proteome</keyword>
<dbReference type="EMBL" id="AJ404326">
    <property type="protein sequence ID" value="CAB93981.1"/>
    <property type="molecule type" value="mRNA"/>
</dbReference>
<dbReference type="EMBL" id="AJ404326">
    <property type="protein sequence ID" value="CAB93982.1"/>
    <property type="molecule type" value="mRNA"/>
</dbReference>
<dbReference type="EMBL" id="AY005111">
    <property type="protein sequence ID" value="AAG22846.1"/>
    <property type="molecule type" value="mRNA"/>
</dbReference>
<dbReference type="EMBL" id="AE006462">
    <property type="protein sequence ID" value="AAK61218.1"/>
    <property type="molecule type" value="Genomic_DNA"/>
</dbReference>
<dbReference type="EMBL" id="AK001093">
    <property type="protein sequence ID" value="BAA91500.1"/>
    <property type="molecule type" value="mRNA"/>
</dbReference>
<dbReference type="EMBL" id="Z69890">
    <property type="protein sequence ID" value="CAM26671.1"/>
    <property type="molecule type" value="Genomic_DNA"/>
</dbReference>
<dbReference type="EMBL" id="Z69706">
    <property type="protein sequence ID" value="CAM26671.1"/>
    <property type="status" value="JOINED"/>
    <property type="molecule type" value="Genomic_DNA"/>
</dbReference>
<dbReference type="EMBL" id="CH471112">
    <property type="protein sequence ID" value="EAW85853.1"/>
    <property type="molecule type" value="Genomic_DNA"/>
</dbReference>
<dbReference type="EMBL" id="BC003194">
    <property type="protein sequence ID" value="AAH03194.1"/>
    <property type="molecule type" value="mRNA"/>
</dbReference>
<dbReference type="EMBL" id="BC065198">
    <property type="protein sequence ID" value="AAH65198.1"/>
    <property type="molecule type" value="mRNA"/>
</dbReference>
<dbReference type="CCDS" id="CCDS10401.1">
    <molecule id="Q9NQ29-2"/>
</dbReference>
<dbReference type="CCDS" id="CCDS32348.1">
    <molecule id="Q9NQ29-1"/>
</dbReference>
<dbReference type="RefSeq" id="NP_001307155.1">
    <molecule id="Q9NQ29-2"/>
    <property type="nucleotide sequence ID" value="NM_001320226.2"/>
</dbReference>
<dbReference type="RefSeq" id="NP_001317349.1">
    <property type="nucleotide sequence ID" value="NM_001330420.1"/>
</dbReference>
<dbReference type="RefSeq" id="NP_060502.1">
    <molecule id="Q9NQ29-2"/>
    <property type="nucleotide sequence ID" value="NM_018032.5"/>
</dbReference>
<dbReference type="RefSeq" id="NP_958815.1">
    <molecule id="Q9NQ29-1"/>
    <property type="nucleotide sequence ID" value="NM_201412.3"/>
</dbReference>
<dbReference type="SMR" id="Q9NQ29"/>
<dbReference type="BioGRID" id="120818">
    <property type="interactions" value="263"/>
</dbReference>
<dbReference type="FunCoup" id="Q9NQ29">
    <property type="interactions" value="1764"/>
</dbReference>
<dbReference type="IntAct" id="Q9NQ29">
    <property type="interactions" value="137"/>
</dbReference>
<dbReference type="MINT" id="Q9NQ29"/>
<dbReference type="STRING" id="9606.ENSP00000293872"/>
<dbReference type="GlyGen" id="Q9NQ29">
    <property type="glycosylation" value="1 site, 1 O-linked glycan (1 site)"/>
</dbReference>
<dbReference type="iPTMnet" id="Q9NQ29"/>
<dbReference type="MetOSite" id="Q9NQ29"/>
<dbReference type="PhosphoSitePlus" id="Q9NQ29"/>
<dbReference type="BioMuta" id="LUC7L"/>
<dbReference type="DMDM" id="47116932"/>
<dbReference type="jPOST" id="Q9NQ29"/>
<dbReference type="MassIVE" id="Q9NQ29"/>
<dbReference type="PaxDb" id="9606-ENSP00000293872"/>
<dbReference type="PeptideAtlas" id="Q9NQ29"/>
<dbReference type="ProteomicsDB" id="82058">
    <molecule id="Q9NQ29-1"/>
</dbReference>
<dbReference type="ProteomicsDB" id="82059">
    <molecule id="Q9NQ29-2"/>
</dbReference>
<dbReference type="ProteomicsDB" id="82060">
    <molecule id="Q9NQ29-3"/>
</dbReference>
<dbReference type="Pumba" id="Q9NQ29"/>
<dbReference type="Antibodypedia" id="22529">
    <property type="antibodies" value="206 antibodies from 23 providers"/>
</dbReference>
<dbReference type="DNASU" id="55692"/>
<dbReference type="Ensembl" id="ENST00000293872.13">
    <molecule id="Q9NQ29-1"/>
    <property type="protein sequence ID" value="ENSP00000293872.8"/>
    <property type="gene ID" value="ENSG00000007392.17"/>
</dbReference>
<dbReference type="Ensembl" id="ENST00000337351.8">
    <molecule id="Q9NQ29-2"/>
    <property type="protein sequence ID" value="ENSP00000337507.4"/>
    <property type="gene ID" value="ENSG00000007392.17"/>
</dbReference>
<dbReference type="Ensembl" id="ENST00000397783.5">
    <molecule id="Q9NQ29-2"/>
    <property type="protein sequence ID" value="ENSP00000380885.1"/>
    <property type="gene ID" value="ENSG00000007392.17"/>
</dbReference>
<dbReference type="GeneID" id="55692"/>
<dbReference type="KEGG" id="hsa:55692"/>
<dbReference type="MANE-Select" id="ENST00000293872.13">
    <property type="protein sequence ID" value="ENSP00000293872.8"/>
    <property type="RefSeq nucleotide sequence ID" value="NM_201412.3"/>
    <property type="RefSeq protein sequence ID" value="NP_958815.1"/>
</dbReference>
<dbReference type="UCSC" id="uc002cga.2">
    <molecule id="Q9NQ29-1"/>
    <property type="organism name" value="human"/>
</dbReference>
<dbReference type="AGR" id="HGNC:6723"/>
<dbReference type="CTD" id="55692"/>
<dbReference type="DisGeNET" id="55692"/>
<dbReference type="GeneCards" id="LUC7L"/>
<dbReference type="HGNC" id="HGNC:6723">
    <property type="gene designation" value="LUC7L"/>
</dbReference>
<dbReference type="HPA" id="ENSG00000007392">
    <property type="expression patterns" value="Low tissue specificity"/>
</dbReference>
<dbReference type="MIM" id="607782">
    <property type="type" value="gene"/>
</dbReference>
<dbReference type="neXtProt" id="NX_Q9NQ29"/>
<dbReference type="OpenTargets" id="ENSG00000007392"/>
<dbReference type="PharmGKB" id="PA30485"/>
<dbReference type="VEuPathDB" id="HostDB:ENSG00000007392"/>
<dbReference type="eggNOG" id="KOG0796">
    <property type="taxonomic scope" value="Eukaryota"/>
</dbReference>
<dbReference type="GeneTree" id="ENSGT00950000183213"/>
<dbReference type="HOGENOM" id="CLU_030397_3_1_1"/>
<dbReference type="InParanoid" id="Q9NQ29"/>
<dbReference type="OMA" id="CPYDLFQ"/>
<dbReference type="OrthoDB" id="153872at2759"/>
<dbReference type="PAN-GO" id="Q9NQ29">
    <property type="GO annotations" value="4 GO annotations based on evolutionary models"/>
</dbReference>
<dbReference type="PhylomeDB" id="Q9NQ29"/>
<dbReference type="TreeFam" id="TF317607"/>
<dbReference type="PathwayCommons" id="Q9NQ29"/>
<dbReference type="SignaLink" id="Q9NQ29"/>
<dbReference type="BioGRID-ORCS" id="55692">
    <property type="hits" value="13 hits in 1159 CRISPR screens"/>
</dbReference>
<dbReference type="CD-CODE" id="804901D1">
    <property type="entry name" value="Nuclear speckle"/>
</dbReference>
<dbReference type="ChiTaRS" id="LUC7L">
    <property type="organism name" value="human"/>
</dbReference>
<dbReference type="GeneWiki" id="LUC7L"/>
<dbReference type="GenomeRNAi" id="55692"/>
<dbReference type="Pharos" id="Q9NQ29">
    <property type="development level" value="Tbio"/>
</dbReference>
<dbReference type="PRO" id="PR:Q9NQ29"/>
<dbReference type="Proteomes" id="UP000005640">
    <property type="component" value="Chromosome 16"/>
</dbReference>
<dbReference type="RNAct" id="Q9NQ29">
    <property type="molecule type" value="protein"/>
</dbReference>
<dbReference type="Bgee" id="ENSG00000007392">
    <property type="expression patterns" value="Expressed in tendon of biceps brachii and 193 other cell types or tissues"/>
</dbReference>
<dbReference type="ExpressionAtlas" id="Q9NQ29">
    <property type="expression patterns" value="baseline and differential"/>
</dbReference>
<dbReference type="GO" id="GO:0005685">
    <property type="term" value="C:U1 snRNP"/>
    <property type="evidence" value="ECO:0000318"/>
    <property type="project" value="GO_Central"/>
</dbReference>
<dbReference type="GO" id="GO:0071004">
    <property type="term" value="C:U2-type prespliceosome"/>
    <property type="evidence" value="ECO:0000318"/>
    <property type="project" value="GO_Central"/>
</dbReference>
<dbReference type="GO" id="GO:0042802">
    <property type="term" value="F:identical protein binding"/>
    <property type="evidence" value="ECO:0000353"/>
    <property type="project" value="IntAct"/>
</dbReference>
<dbReference type="GO" id="GO:0003729">
    <property type="term" value="F:mRNA binding"/>
    <property type="evidence" value="ECO:0000318"/>
    <property type="project" value="GO_Central"/>
</dbReference>
<dbReference type="GO" id="GO:0050733">
    <property type="term" value="F:RS domain binding"/>
    <property type="evidence" value="ECO:0007669"/>
    <property type="project" value="Ensembl"/>
</dbReference>
<dbReference type="GO" id="GO:0006376">
    <property type="term" value="P:mRNA splice site recognition"/>
    <property type="evidence" value="ECO:0000318"/>
    <property type="project" value="GO_Central"/>
</dbReference>
<dbReference type="GO" id="GO:0045843">
    <property type="term" value="P:negative regulation of striated muscle tissue development"/>
    <property type="evidence" value="ECO:0007669"/>
    <property type="project" value="Ensembl"/>
</dbReference>
<dbReference type="InterPro" id="IPR004882">
    <property type="entry name" value="Luc7-rel"/>
</dbReference>
<dbReference type="PANTHER" id="PTHR12375">
    <property type="entry name" value="RNA-BINDING PROTEIN LUC7-RELATED"/>
    <property type="match status" value="1"/>
</dbReference>
<dbReference type="Pfam" id="PF03194">
    <property type="entry name" value="LUC7"/>
    <property type="match status" value="1"/>
</dbReference>
<gene>
    <name type="primary">LUC7L</name>
    <name type="synonym">LUC7L1</name>
</gene>
<sequence>MSAQAQMRALLDQLMGTARDGDETRQRVKFTDDRVCKSHLLDCCPHDILAGTRMDLGECTKIHDLALRADYEIASKERDLFFELDAMDHLESFIAECDRRTELAKKRLAETQEEISAEVSAKAEKVHELNEEIGKLLAKAEQLGAEGNVDESQKILMEVEKVRAKKKEAEEEYRNSMPASSFQQQKLRVCEVCSAYLGLHDNDRRLADHFGGKLHLGFIQIREKLDQLRKTVAEKQEKRNQDRLRRREEREREERLSRRSGSRTRDRRRSRSRDRRRRRSRSTSRERRKLSRSRSRDRHRRHRSRSRSHSRGHRRASRDRSAKYKFSRERASREESWESGRSERGPPDWRLESSNGKMASRRSEEKEAGEI</sequence>
<name>LUC7L_HUMAN</name>
<proteinExistence type="evidence at protein level"/>
<feature type="chain" id="PRO_0000187280" description="Putative RNA-binding protein Luc7-like 1">
    <location>
        <begin position="1"/>
        <end position="371"/>
    </location>
</feature>
<feature type="region of interest" description="Disordered" evidence="2">
    <location>
        <begin position="232"/>
        <end position="371"/>
    </location>
</feature>
<feature type="coiled-coil region" evidence="1">
    <location>
        <begin position="87"/>
        <end position="177"/>
    </location>
</feature>
<feature type="coiled-coil region" evidence="1">
    <location>
        <begin position="218"/>
        <end position="259"/>
    </location>
</feature>
<feature type="compositionally biased region" description="Basic and acidic residues" evidence="2">
    <location>
        <begin position="232"/>
        <end position="257"/>
    </location>
</feature>
<feature type="compositionally biased region" description="Basic residues" evidence="2">
    <location>
        <begin position="258"/>
        <end position="317"/>
    </location>
</feature>
<feature type="compositionally biased region" description="Basic and acidic residues" evidence="2">
    <location>
        <begin position="318"/>
        <end position="351"/>
    </location>
</feature>
<feature type="compositionally biased region" description="Basic and acidic residues" evidence="2">
    <location>
        <begin position="361"/>
        <end position="371"/>
    </location>
</feature>
<feature type="modified residue" description="Phosphoserine" evidence="11">
    <location>
        <position position="332"/>
    </location>
</feature>
<feature type="modified residue" description="Phosphoserine" evidence="11">
    <location>
        <position position="336"/>
    </location>
</feature>
<feature type="modified residue" description="Phosphoserine" evidence="7 8 9 10 11">
    <location>
        <position position="363"/>
    </location>
</feature>
<feature type="splice variant" id="VSP_010214" description="In isoform 3." evidence="5">
    <original>MSAQAQMRALLDQLMGTARD</original>
    <variation>MQM</variation>
    <location>
        <begin position="1"/>
        <end position="20"/>
    </location>
</feature>
<feature type="splice variant" id="VSP_010215" description="In isoform 2." evidence="4 5">
    <location>
        <begin position="326"/>
        <end position="371"/>
    </location>
</feature>
<feature type="sequence conflict" description="In Ref. 3; AAK61218." evidence="6" ref="3">
    <original>E</original>
    <variation>V</variation>
    <location>
        <position position="171"/>
    </location>
</feature>
<reference key="1">
    <citation type="submission" date="2000-06" db="EMBL/GenBank/DDBJ databases">
        <title>SR+89, a gene encoding a serine/arginine-rich protein, is widely transcribed from human chromosome 16p13.3 proximal to the alpha-globin cluster. Exclusion of this new gene as a candidate gene for the hypospadic phenotype associated with homozygous SEA-alpha-thalassaemia.</title>
        <authorList>
            <person name="Utsch B."/>
            <person name="Albers N."/>
            <person name="Wickert L."/>
            <person name="Bidlingmaier F."/>
            <person name="Ludwig M."/>
        </authorList>
    </citation>
    <scope>NUCLEOTIDE SEQUENCE (ISOFORM 2)</scope>
</reference>
<reference key="2">
    <citation type="journal article" date="2001" name="Genomics">
        <title>Characterization of a widely expressed gene (LUC7-LIKE; LUC7L) defining the centromeric boundary of the human alpha-globin domain.</title>
        <authorList>
            <person name="Tufarelli C."/>
            <person name="Frischauf A.-M."/>
            <person name="Hardison R."/>
            <person name="Flint J."/>
            <person name="Higgs D.R."/>
        </authorList>
    </citation>
    <scope>NUCLEOTIDE SEQUENCE [MRNA] (ISOFORM 1)</scope>
    <scope>FUNCTION</scope>
    <scope>TISSUE SPECIFICITY</scope>
</reference>
<reference key="3">
    <citation type="journal article" date="2001" name="Hum. Mol. Genet.">
        <title>Sequence, structure and pathology of the fully annotated terminal 2 Mb of the short arm of human chromosome 16.</title>
        <authorList>
            <person name="Daniels R.J."/>
            <person name="Peden J.F."/>
            <person name="Lloyd C."/>
            <person name="Horsley S.W."/>
            <person name="Clark K."/>
            <person name="Tufarelli C."/>
            <person name="Kearney L."/>
            <person name="Buckle V.J."/>
            <person name="Doggett N.A."/>
            <person name="Flint J."/>
            <person name="Higgs D.R."/>
        </authorList>
    </citation>
    <scope>NUCLEOTIDE SEQUENCE [LARGE SCALE GENOMIC DNA]</scope>
</reference>
<reference key="4">
    <citation type="submission" date="2005-09" db="EMBL/GenBank/DDBJ databases">
        <authorList>
            <person name="Mural R.J."/>
            <person name="Istrail S."/>
            <person name="Sutton G.G."/>
            <person name="Florea L."/>
            <person name="Halpern A.L."/>
            <person name="Mobarry C.M."/>
            <person name="Lippert R."/>
            <person name="Walenz B."/>
            <person name="Shatkay H."/>
            <person name="Dew I."/>
            <person name="Miller J.R."/>
            <person name="Flanigan M.J."/>
            <person name="Edwards N.J."/>
            <person name="Bolanos R."/>
            <person name="Fasulo D."/>
            <person name="Halldorsson B.V."/>
            <person name="Hannenhalli S."/>
            <person name="Turner R."/>
            <person name="Yooseph S."/>
            <person name="Lu F."/>
            <person name="Nusskern D.R."/>
            <person name="Shue B.C."/>
            <person name="Zheng X.H."/>
            <person name="Zhong F."/>
            <person name="Delcher A.L."/>
            <person name="Huson D.H."/>
            <person name="Kravitz S.A."/>
            <person name="Mouchard L."/>
            <person name="Reinert K."/>
            <person name="Remington K.A."/>
            <person name="Clark A.G."/>
            <person name="Waterman M.S."/>
            <person name="Eichler E.E."/>
            <person name="Adams M.D."/>
            <person name="Hunkapiller M.W."/>
            <person name="Myers E.W."/>
            <person name="Venter J.C."/>
        </authorList>
    </citation>
    <scope>NUCLEOTIDE SEQUENCE [LARGE SCALE GENOMIC DNA]</scope>
</reference>
<reference key="5">
    <citation type="journal article" date="2004" name="Nat. Genet.">
        <title>Complete sequencing and characterization of 21,243 full-length human cDNAs.</title>
        <authorList>
            <person name="Ota T."/>
            <person name="Suzuki Y."/>
            <person name="Nishikawa T."/>
            <person name="Otsuki T."/>
            <person name="Sugiyama T."/>
            <person name="Irie R."/>
            <person name="Wakamatsu A."/>
            <person name="Hayashi K."/>
            <person name="Sato H."/>
            <person name="Nagai K."/>
            <person name="Kimura K."/>
            <person name="Makita H."/>
            <person name="Sekine M."/>
            <person name="Obayashi M."/>
            <person name="Nishi T."/>
            <person name="Shibahara T."/>
            <person name="Tanaka T."/>
            <person name="Ishii S."/>
            <person name="Yamamoto J."/>
            <person name="Saito K."/>
            <person name="Kawai Y."/>
            <person name="Isono Y."/>
            <person name="Nakamura Y."/>
            <person name="Nagahari K."/>
            <person name="Murakami K."/>
            <person name="Yasuda T."/>
            <person name="Iwayanagi T."/>
            <person name="Wagatsuma M."/>
            <person name="Shiratori A."/>
            <person name="Sudo H."/>
            <person name="Hosoiri T."/>
            <person name="Kaku Y."/>
            <person name="Kodaira H."/>
            <person name="Kondo H."/>
            <person name="Sugawara M."/>
            <person name="Takahashi M."/>
            <person name="Kanda K."/>
            <person name="Yokoi T."/>
            <person name="Furuya T."/>
            <person name="Kikkawa E."/>
            <person name="Omura Y."/>
            <person name="Abe K."/>
            <person name="Kamihara K."/>
            <person name="Katsuta N."/>
            <person name="Sato K."/>
            <person name="Tanikawa M."/>
            <person name="Yamazaki M."/>
            <person name="Ninomiya K."/>
            <person name="Ishibashi T."/>
            <person name="Yamashita H."/>
            <person name="Murakawa K."/>
            <person name="Fujimori K."/>
            <person name="Tanai H."/>
            <person name="Kimata M."/>
            <person name="Watanabe M."/>
            <person name="Hiraoka S."/>
            <person name="Chiba Y."/>
            <person name="Ishida S."/>
            <person name="Ono Y."/>
            <person name="Takiguchi S."/>
            <person name="Watanabe S."/>
            <person name="Yosida M."/>
            <person name="Hotuta T."/>
            <person name="Kusano J."/>
            <person name="Kanehori K."/>
            <person name="Takahashi-Fujii A."/>
            <person name="Hara H."/>
            <person name="Tanase T.-O."/>
            <person name="Nomura Y."/>
            <person name="Togiya S."/>
            <person name="Komai F."/>
            <person name="Hara R."/>
            <person name="Takeuchi K."/>
            <person name="Arita M."/>
            <person name="Imose N."/>
            <person name="Musashino K."/>
            <person name="Yuuki H."/>
            <person name="Oshima A."/>
            <person name="Sasaki N."/>
            <person name="Aotsuka S."/>
            <person name="Yoshikawa Y."/>
            <person name="Matsunawa H."/>
            <person name="Ichihara T."/>
            <person name="Shiohata N."/>
            <person name="Sano S."/>
            <person name="Moriya S."/>
            <person name="Momiyama H."/>
            <person name="Satoh N."/>
            <person name="Takami S."/>
            <person name="Terashima Y."/>
            <person name="Suzuki O."/>
            <person name="Nakagawa S."/>
            <person name="Senoh A."/>
            <person name="Mizoguchi H."/>
            <person name="Goto Y."/>
            <person name="Shimizu F."/>
            <person name="Wakebe H."/>
            <person name="Hishigaki H."/>
            <person name="Watanabe T."/>
            <person name="Sugiyama A."/>
            <person name="Takemoto M."/>
            <person name="Kawakami B."/>
            <person name="Yamazaki M."/>
            <person name="Watanabe K."/>
            <person name="Kumagai A."/>
            <person name="Itakura S."/>
            <person name="Fukuzumi Y."/>
            <person name="Fujimori Y."/>
            <person name="Komiyama M."/>
            <person name="Tashiro H."/>
            <person name="Tanigami A."/>
            <person name="Fujiwara T."/>
            <person name="Ono T."/>
            <person name="Yamada K."/>
            <person name="Fujii Y."/>
            <person name="Ozaki K."/>
            <person name="Hirao M."/>
            <person name="Ohmori Y."/>
            <person name="Kawabata A."/>
            <person name="Hikiji T."/>
            <person name="Kobatake N."/>
            <person name="Inagaki H."/>
            <person name="Ikema Y."/>
            <person name="Okamoto S."/>
            <person name="Okitani R."/>
            <person name="Kawakami T."/>
            <person name="Noguchi S."/>
            <person name="Itoh T."/>
            <person name="Shigeta K."/>
            <person name="Senba T."/>
            <person name="Matsumura K."/>
            <person name="Nakajima Y."/>
            <person name="Mizuno T."/>
            <person name="Morinaga M."/>
            <person name="Sasaki M."/>
            <person name="Togashi T."/>
            <person name="Oyama M."/>
            <person name="Hata H."/>
            <person name="Watanabe M."/>
            <person name="Komatsu T."/>
            <person name="Mizushima-Sugano J."/>
            <person name="Satoh T."/>
            <person name="Shirai Y."/>
            <person name="Takahashi Y."/>
            <person name="Nakagawa K."/>
            <person name="Okumura K."/>
            <person name="Nagase T."/>
            <person name="Nomura N."/>
            <person name="Kikuchi H."/>
            <person name="Masuho Y."/>
            <person name="Yamashita R."/>
            <person name="Nakai K."/>
            <person name="Yada T."/>
            <person name="Nakamura Y."/>
            <person name="Ohara O."/>
            <person name="Isogai T."/>
            <person name="Sugano S."/>
        </authorList>
    </citation>
    <scope>NUCLEOTIDE SEQUENCE [LARGE SCALE MRNA] (ISOFORM 2)</scope>
    <source>
        <tissue>Embryo</tissue>
    </source>
</reference>
<reference key="6">
    <citation type="journal article" date="2004" name="Nature">
        <title>The sequence and analysis of duplication-rich human chromosome 16.</title>
        <authorList>
            <person name="Martin J."/>
            <person name="Han C."/>
            <person name="Gordon L.A."/>
            <person name="Terry A."/>
            <person name="Prabhakar S."/>
            <person name="She X."/>
            <person name="Xie G."/>
            <person name="Hellsten U."/>
            <person name="Chan Y.M."/>
            <person name="Altherr M."/>
            <person name="Couronne O."/>
            <person name="Aerts A."/>
            <person name="Bajorek E."/>
            <person name="Black S."/>
            <person name="Blumer H."/>
            <person name="Branscomb E."/>
            <person name="Brown N.C."/>
            <person name="Bruno W.J."/>
            <person name="Buckingham J.M."/>
            <person name="Callen D.F."/>
            <person name="Campbell C.S."/>
            <person name="Campbell M.L."/>
            <person name="Campbell E.W."/>
            <person name="Caoile C."/>
            <person name="Challacombe J.F."/>
            <person name="Chasteen L.A."/>
            <person name="Chertkov O."/>
            <person name="Chi H.C."/>
            <person name="Christensen M."/>
            <person name="Clark L.M."/>
            <person name="Cohn J.D."/>
            <person name="Denys M."/>
            <person name="Detter J.C."/>
            <person name="Dickson M."/>
            <person name="Dimitrijevic-Bussod M."/>
            <person name="Escobar J."/>
            <person name="Fawcett J.J."/>
            <person name="Flowers D."/>
            <person name="Fotopulos D."/>
            <person name="Glavina T."/>
            <person name="Gomez M."/>
            <person name="Gonzales E."/>
            <person name="Goodstein D."/>
            <person name="Goodwin L.A."/>
            <person name="Grady D.L."/>
            <person name="Grigoriev I."/>
            <person name="Groza M."/>
            <person name="Hammon N."/>
            <person name="Hawkins T."/>
            <person name="Haydu L."/>
            <person name="Hildebrand C.E."/>
            <person name="Huang W."/>
            <person name="Israni S."/>
            <person name="Jett J."/>
            <person name="Jewett P.B."/>
            <person name="Kadner K."/>
            <person name="Kimball H."/>
            <person name="Kobayashi A."/>
            <person name="Krawczyk M.-C."/>
            <person name="Leyba T."/>
            <person name="Longmire J.L."/>
            <person name="Lopez F."/>
            <person name="Lou Y."/>
            <person name="Lowry S."/>
            <person name="Ludeman T."/>
            <person name="Manohar C.F."/>
            <person name="Mark G.A."/>
            <person name="McMurray K.L."/>
            <person name="Meincke L.J."/>
            <person name="Morgan J."/>
            <person name="Moyzis R.K."/>
            <person name="Mundt M.O."/>
            <person name="Munk A.C."/>
            <person name="Nandkeshwar R.D."/>
            <person name="Pitluck S."/>
            <person name="Pollard M."/>
            <person name="Predki P."/>
            <person name="Parson-Quintana B."/>
            <person name="Ramirez L."/>
            <person name="Rash S."/>
            <person name="Retterer J."/>
            <person name="Ricke D.O."/>
            <person name="Robinson D.L."/>
            <person name="Rodriguez A."/>
            <person name="Salamov A."/>
            <person name="Saunders E.H."/>
            <person name="Scott D."/>
            <person name="Shough T."/>
            <person name="Stallings R.L."/>
            <person name="Stalvey M."/>
            <person name="Sutherland R.D."/>
            <person name="Tapia R."/>
            <person name="Tesmer J.G."/>
            <person name="Thayer N."/>
            <person name="Thompson L.S."/>
            <person name="Tice H."/>
            <person name="Torney D.C."/>
            <person name="Tran-Gyamfi M."/>
            <person name="Tsai M."/>
            <person name="Ulanovsky L.E."/>
            <person name="Ustaszewska A."/>
            <person name="Vo N."/>
            <person name="White P.S."/>
            <person name="Williams A.L."/>
            <person name="Wills P.L."/>
            <person name="Wu J.-R."/>
            <person name="Wu K."/>
            <person name="Yang J."/>
            <person name="DeJong P."/>
            <person name="Bruce D."/>
            <person name="Doggett N.A."/>
            <person name="Deaven L."/>
            <person name="Schmutz J."/>
            <person name="Grimwood J."/>
            <person name="Richardson P."/>
            <person name="Rokhsar D.S."/>
            <person name="Eichler E.E."/>
            <person name="Gilna P."/>
            <person name="Lucas S.M."/>
            <person name="Myers R.M."/>
            <person name="Rubin E.M."/>
            <person name="Pennacchio L.A."/>
        </authorList>
    </citation>
    <scope>NUCLEOTIDE SEQUENCE [LARGE SCALE GENOMIC DNA]</scope>
</reference>
<reference key="7">
    <citation type="journal article" date="2004" name="Genome Res.">
        <title>The status, quality, and expansion of the NIH full-length cDNA project: the Mammalian Gene Collection (MGC).</title>
        <authorList>
            <consortium name="The MGC Project Team"/>
        </authorList>
    </citation>
    <scope>NUCLEOTIDE SEQUENCE [LARGE SCALE MRNA] (ISOFORMS 2 AND 3)</scope>
    <source>
        <tissue>Blood</tissue>
        <tissue>Lung</tissue>
    </source>
</reference>
<reference key="8">
    <citation type="journal article" date="2006" name="Cell">
        <title>Global, in vivo, and site-specific phosphorylation dynamics in signaling networks.</title>
        <authorList>
            <person name="Olsen J.V."/>
            <person name="Blagoev B."/>
            <person name="Gnad F."/>
            <person name="Macek B."/>
            <person name="Kumar C."/>
            <person name="Mortensen P."/>
            <person name="Mann M."/>
        </authorList>
    </citation>
    <scope>PHOSPHORYLATION [LARGE SCALE ANALYSIS] AT SER-363</scope>
    <scope>IDENTIFICATION BY MASS SPECTROMETRY [LARGE SCALE ANALYSIS]</scope>
    <source>
        <tissue>Cervix carcinoma</tissue>
    </source>
</reference>
<reference key="9">
    <citation type="journal article" date="2008" name="Proc. Natl. Acad. Sci. U.S.A.">
        <title>A quantitative atlas of mitotic phosphorylation.</title>
        <authorList>
            <person name="Dephoure N."/>
            <person name="Zhou C."/>
            <person name="Villen J."/>
            <person name="Beausoleil S.A."/>
            <person name="Bakalarski C.E."/>
            <person name="Elledge S.J."/>
            <person name="Gygi S.P."/>
        </authorList>
    </citation>
    <scope>IDENTIFICATION BY MASS SPECTROMETRY [LARGE SCALE ANALYSIS]</scope>
    <source>
        <tissue>Cervix carcinoma</tissue>
    </source>
</reference>
<reference key="10">
    <citation type="journal article" date="2009" name="Sci. Signal.">
        <title>Quantitative phosphoproteomic analysis of T cell receptor signaling reveals system-wide modulation of protein-protein interactions.</title>
        <authorList>
            <person name="Mayya V."/>
            <person name="Lundgren D.H."/>
            <person name="Hwang S.-I."/>
            <person name="Rezaul K."/>
            <person name="Wu L."/>
            <person name="Eng J.K."/>
            <person name="Rodionov V."/>
            <person name="Han D.K."/>
        </authorList>
    </citation>
    <scope>PHOSPHORYLATION [LARGE SCALE ANALYSIS] AT SER-363</scope>
    <scope>IDENTIFICATION BY MASS SPECTROMETRY [LARGE SCALE ANALYSIS]</scope>
    <source>
        <tissue>Leukemic T-cell</tissue>
    </source>
</reference>
<reference key="11">
    <citation type="journal article" date="2010" name="Sci. Signal.">
        <title>Quantitative phosphoproteomics reveals widespread full phosphorylation site occupancy during mitosis.</title>
        <authorList>
            <person name="Olsen J.V."/>
            <person name="Vermeulen M."/>
            <person name="Santamaria A."/>
            <person name="Kumar C."/>
            <person name="Miller M.L."/>
            <person name="Jensen L.J."/>
            <person name="Gnad F."/>
            <person name="Cox J."/>
            <person name="Jensen T.S."/>
            <person name="Nigg E.A."/>
            <person name="Brunak S."/>
            <person name="Mann M."/>
        </authorList>
    </citation>
    <scope>PHOSPHORYLATION [LARGE SCALE ANALYSIS] AT SER-363</scope>
    <scope>IDENTIFICATION BY MASS SPECTROMETRY [LARGE SCALE ANALYSIS]</scope>
    <source>
        <tissue>Cervix carcinoma</tissue>
    </source>
</reference>
<reference key="12">
    <citation type="journal article" date="2011" name="BMC Syst. Biol.">
        <title>Initial characterization of the human central proteome.</title>
        <authorList>
            <person name="Burkard T.R."/>
            <person name="Planyavsky M."/>
            <person name="Kaupe I."/>
            <person name="Breitwieser F.P."/>
            <person name="Buerckstuemmer T."/>
            <person name="Bennett K.L."/>
            <person name="Superti-Furga G."/>
            <person name="Colinge J."/>
        </authorList>
    </citation>
    <scope>IDENTIFICATION BY MASS SPECTROMETRY [LARGE SCALE ANALYSIS]</scope>
</reference>
<reference key="13">
    <citation type="journal article" date="2011" name="Sci. Signal.">
        <title>System-wide temporal characterization of the proteome and phosphoproteome of human embryonic stem cell differentiation.</title>
        <authorList>
            <person name="Rigbolt K.T."/>
            <person name="Prokhorova T.A."/>
            <person name="Akimov V."/>
            <person name="Henningsen J."/>
            <person name="Johansen P.T."/>
            <person name="Kratchmarova I."/>
            <person name="Kassem M."/>
            <person name="Mann M."/>
            <person name="Olsen J.V."/>
            <person name="Blagoev B."/>
        </authorList>
    </citation>
    <scope>PHOSPHORYLATION [LARGE SCALE ANALYSIS] AT SER-363</scope>
    <scope>IDENTIFICATION BY MASS SPECTROMETRY [LARGE SCALE ANALYSIS]</scope>
</reference>
<reference key="14">
    <citation type="journal article" date="2013" name="J. Proteome Res.">
        <title>Toward a comprehensive characterization of a human cancer cell phosphoproteome.</title>
        <authorList>
            <person name="Zhou H."/>
            <person name="Di Palma S."/>
            <person name="Preisinger C."/>
            <person name="Peng M."/>
            <person name="Polat A.N."/>
            <person name="Heck A.J."/>
            <person name="Mohammed S."/>
        </authorList>
    </citation>
    <scope>PHOSPHORYLATION [LARGE SCALE ANALYSIS] AT SER-332; SER-336 AND SER-363</scope>
    <scope>IDENTIFICATION BY MASS SPECTROMETRY [LARGE SCALE ANALYSIS]</scope>
    <source>
        <tissue>Cervix carcinoma</tissue>
        <tissue>Erythroleukemia</tissue>
    </source>
</reference>
<organism>
    <name type="scientific">Homo sapiens</name>
    <name type="common">Human</name>
    <dbReference type="NCBI Taxonomy" id="9606"/>
    <lineage>
        <taxon>Eukaryota</taxon>
        <taxon>Metazoa</taxon>
        <taxon>Chordata</taxon>
        <taxon>Craniata</taxon>
        <taxon>Vertebrata</taxon>
        <taxon>Euteleostomi</taxon>
        <taxon>Mammalia</taxon>
        <taxon>Eutheria</taxon>
        <taxon>Euarchontoglires</taxon>
        <taxon>Primates</taxon>
        <taxon>Haplorrhini</taxon>
        <taxon>Catarrhini</taxon>
        <taxon>Hominidae</taxon>
        <taxon>Homo</taxon>
    </lineage>
</organism>
<evidence type="ECO:0000255" key="1"/>
<evidence type="ECO:0000256" key="2">
    <source>
        <dbReference type="SAM" id="MobiDB-lite"/>
    </source>
</evidence>
<evidence type="ECO:0000269" key="3">
    <source>
    </source>
</evidence>
<evidence type="ECO:0000303" key="4">
    <source>
    </source>
</evidence>
<evidence type="ECO:0000303" key="5">
    <source>
    </source>
</evidence>
<evidence type="ECO:0000305" key="6"/>
<evidence type="ECO:0007744" key="7">
    <source>
    </source>
</evidence>
<evidence type="ECO:0007744" key="8">
    <source>
    </source>
</evidence>
<evidence type="ECO:0007744" key="9">
    <source>
    </source>
</evidence>
<evidence type="ECO:0007744" key="10">
    <source>
    </source>
</evidence>
<evidence type="ECO:0007744" key="11">
    <source>
    </source>
</evidence>